<comment type="caution">
    <text evidence="2">Could be the product of a pseudogene.</text>
</comment>
<evidence type="ECO:0000256" key="1">
    <source>
        <dbReference type="SAM" id="MobiDB-lite"/>
    </source>
</evidence>
<evidence type="ECO:0000305" key="2"/>
<dbReference type="EMBL" id="U00090">
    <property type="protein sequence ID" value="AAB91837.1"/>
    <property type="molecule type" value="Genomic_DNA"/>
</dbReference>
<dbReference type="RefSeq" id="NP_444050.1">
    <property type="nucleotide sequence ID" value="NC_000914.2"/>
</dbReference>
<dbReference type="SMR" id="P55645"/>
<dbReference type="KEGG" id="rhi:NGR_a01750"/>
<dbReference type="PATRIC" id="fig|394.7.peg.170"/>
<dbReference type="eggNOG" id="COG2801">
    <property type="taxonomic scope" value="Bacteria"/>
</dbReference>
<dbReference type="HOGENOM" id="CLU_1694082_0_0_5"/>
<dbReference type="OrthoDB" id="8370020at2"/>
<dbReference type="Proteomes" id="UP000001054">
    <property type="component" value="Plasmid pNGR234a"/>
</dbReference>
<organism>
    <name type="scientific">Sinorhizobium fredii (strain NBRC 101917 / NGR234)</name>
    <dbReference type="NCBI Taxonomy" id="394"/>
    <lineage>
        <taxon>Bacteria</taxon>
        <taxon>Pseudomonadati</taxon>
        <taxon>Pseudomonadota</taxon>
        <taxon>Alphaproteobacteria</taxon>
        <taxon>Hyphomicrobiales</taxon>
        <taxon>Rhizobiaceae</taxon>
        <taxon>Sinorhizobium/Ensifer group</taxon>
        <taxon>Sinorhizobium</taxon>
    </lineage>
</organism>
<geneLocation type="plasmid">
    <name>sym pNGR234a</name>
</geneLocation>
<protein>
    <recommendedName>
        <fullName>Putative uncharacterized protein y4rL</fullName>
    </recommendedName>
</protein>
<accession>P55645</accession>
<sequence>MLEREDPVMLFAGIRAAQEELGKRVDCRGLNAGTEEPLAIDLQRFTVSLKTAWQAGEKRPTHRRPYRRTKPYPKRPSMLEPFEPQIRAWLEADPALSAAAVLQRLVSADPSRFTKKALRTVQMAVKAWRMEIAGQIILDGDWMKRAPVSQCPQLQ</sequence>
<gene>
    <name type="ordered locus">NGR_a01750</name>
    <name type="ORF">y4rL</name>
</gene>
<name>Y4RL_SINFN</name>
<proteinExistence type="uncertain"/>
<reference key="1">
    <citation type="journal article" date="1997" name="Nature">
        <title>Molecular basis of symbiosis between Rhizobium and legumes.</title>
        <authorList>
            <person name="Freiberg C.A."/>
            <person name="Fellay R."/>
            <person name="Bairoch A."/>
            <person name="Broughton W.J."/>
            <person name="Rosenthal A."/>
            <person name="Perret X."/>
        </authorList>
    </citation>
    <scope>NUCLEOTIDE SEQUENCE [LARGE SCALE GENOMIC DNA]</scope>
    <source>
        <strain>NBRC 101917 / NGR234</strain>
    </source>
</reference>
<reference key="2">
    <citation type="journal article" date="2009" name="Appl. Environ. Microbiol.">
        <title>Rhizobium sp. strain NGR234 possesses a remarkable number of secretion systems.</title>
        <authorList>
            <person name="Schmeisser C."/>
            <person name="Liesegang H."/>
            <person name="Krysciak D."/>
            <person name="Bakkou N."/>
            <person name="Le Quere A."/>
            <person name="Wollherr A."/>
            <person name="Heinemeyer I."/>
            <person name="Morgenstern B."/>
            <person name="Pommerening-Roeser A."/>
            <person name="Flores M."/>
            <person name="Palacios R."/>
            <person name="Brenner S."/>
            <person name="Gottschalk G."/>
            <person name="Schmitz R.A."/>
            <person name="Broughton W.J."/>
            <person name="Perret X."/>
            <person name="Strittmatter A.W."/>
            <person name="Streit W.R."/>
        </authorList>
    </citation>
    <scope>NUCLEOTIDE SEQUENCE [LARGE SCALE GENOMIC DNA]</scope>
    <source>
        <strain>NBRC 101917 / NGR234</strain>
    </source>
</reference>
<keyword id="KW-0614">Plasmid</keyword>
<keyword id="KW-1185">Reference proteome</keyword>
<feature type="chain" id="PRO_0000200944" description="Putative uncharacterized protein y4rL">
    <location>
        <begin position="1"/>
        <end position="155"/>
    </location>
</feature>
<feature type="region of interest" description="Disordered" evidence="1">
    <location>
        <begin position="56"/>
        <end position="79"/>
    </location>
</feature>
<feature type="compositionally biased region" description="Basic residues" evidence="1">
    <location>
        <begin position="60"/>
        <end position="73"/>
    </location>
</feature>